<comment type="alternative products">
    <event type="alternative splicing"/>
    <isoform>
        <id>A0A0A6YXX9-1</id>
        <name>1</name>
        <sequence type="displayed"/>
    </isoform>
    <isoform>
        <id>A0A0A6YXX9-2</id>
        <name>2</name>
        <sequence type="described" ref="VSP_058976 VSP_058977"/>
    </isoform>
</comment>
<comment type="similarity">
    <text evidence="2">Belongs to the CATSPERD family.</text>
</comment>
<comment type="caution">
    <text evidence="2">Although related to the CATSPERD family, it is unclear whether the protein is part of a Catsper complex.</text>
</comment>
<evidence type="ECO:0000255" key="1"/>
<evidence type="ECO:0000305" key="2"/>
<evidence type="ECO:0000312" key="3">
    <source>
        <dbReference type="MGI" id="MGI:5589632"/>
    </source>
</evidence>
<dbReference type="EMBL" id="AK131684">
    <property type="protein sequence ID" value="BAE20761.1"/>
    <property type="molecule type" value="mRNA"/>
</dbReference>
<dbReference type="EMBL" id="AC113044">
    <property type="status" value="NOT_ANNOTATED_CDS"/>
    <property type="molecule type" value="Genomic_DNA"/>
</dbReference>
<dbReference type="EMBL" id="AC119928">
    <property type="status" value="NOT_ANNOTATED_CDS"/>
    <property type="molecule type" value="Genomic_DNA"/>
</dbReference>
<dbReference type="EMBL" id="AC124621">
    <property type="status" value="NOT_ANNOTATED_CDS"/>
    <property type="molecule type" value="Genomic_DNA"/>
</dbReference>
<dbReference type="EMBL" id="BC147679">
    <property type="protein sequence ID" value="AAI47680.1"/>
    <property type="molecule type" value="mRNA"/>
</dbReference>
<dbReference type="EMBL" id="BC147686">
    <property type="protein sequence ID" value="AAI47687.1"/>
    <property type="molecule type" value="mRNA"/>
</dbReference>
<dbReference type="CCDS" id="CCDS35802.1">
    <molecule id="A0A0A6YXX9-2"/>
</dbReference>
<dbReference type="RefSeq" id="NP_001030071.2">
    <molecule id="A0A0A6YXX9-2"/>
    <property type="nucleotide sequence ID" value="NM_001034899.3"/>
</dbReference>
<dbReference type="SMR" id="A0A0A6YXX9"/>
<dbReference type="FunCoup" id="A0A0A6YXX9">
    <property type="interactions" value="24"/>
</dbReference>
<dbReference type="GlyCosmos" id="A0A0A6YXX9">
    <property type="glycosylation" value="2 sites, No reported glycans"/>
</dbReference>
<dbReference type="GlyGen" id="A0A0A6YXX9">
    <property type="glycosylation" value="2 sites"/>
</dbReference>
<dbReference type="PaxDb" id="10090-ENSMUSP00000091828"/>
<dbReference type="ProteomicsDB" id="283979">
    <molecule id="A0A0A6YXX9-1"/>
</dbReference>
<dbReference type="ProteomicsDB" id="283980">
    <molecule id="A0A0A6YXX9-2"/>
</dbReference>
<dbReference type="Ensembl" id="ENSMUST00000094273.10">
    <molecule id="A0A0A6YXX9-2"/>
    <property type="protein sequence ID" value="ENSMUSP00000091828.5"/>
    <property type="gene ID" value="ENSMUSG00000091476.9"/>
</dbReference>
<dbReference type="Ensembl" id="ENSMUST00000192146.2">
    <molecule id="A0A0A6YXX9-1"/>
    <property type="protein sequence ID" value="ENSMUSP00000142187.2"/>
    <property type="gene ID" value="ENSMUSG00000091476.9"/>
</dbReference>
<dbReference type="Ensembl" id="ENSMUST00000239155.2">
    <molecule id="A0A0A6YXX9-1"/>
    <property type="protein sequence ID" value="ENSMUSP00000158918.2"/>
    <property type="gene ID" value="ENSMUSG00000091476.9"/>
</dbReference>
<dbReference type="GeneID" id="545391"/>
<dbReference type="KEGG" id="mmu:545391"/>
<dbReference type="UCSC" id="uc007duv.2">
    <property type="organism name" value="mouse"/>
</dbReference>
<dbReference type="AGR" id="MGI:5589632"/>
<dbReference type="CTD" id="545391"/>
<dbReference type="MGI" id="MGI:5589632">
    <property type="gene designation" value="Catspere2"/>
</dbReference>
<dbReference type="VEuPathDB" id="HostDB:ENSMUSG00000091476"/>
<dbReference type="eggNOG" id="ENOG502R8SD">
    <property type="taxonomic scope" value="Eukaryota"/>
</dbReference>
<dbReference type="GeneTree" id="ENSGT00940000162691"/>
<dbReference type="HOGENOM" id="CLU_014273_0_0_1"/>
<dbReference type="InParanoid" id="A0A0A6YXX9"/>
<dbReference type="ChiTaRS" id="Catspere2">
    <property type="organism name" value="mouse"/>
</dbReference>
<dbReference type="PRO" id="PR:A0A0A6YXX9"/>
<dbReference type="Proteomes" id="UP000000589">
    <property type="component" value="Chromosome 1"/>
</dbReference>
<dbReference type="RNAct" id="A0A0A6YXX9">
    <property type="molecule type" value="protein"/>
</dbReference>
<dbReference type="Bgee" id="ENSMUSG00000091476">
    <property type="expression patterns" value="Expressed in spermatocyte and 34 other cell types or tissues"/>
</dbReference>
<dbReference type="ExpressionAtlas" id="A0A0A6YXX9">
    <property type="expression patterns" value="baseline and differential"/>
</dbReference>
<dbReference type="GO" id="GO:0036128">
    <property type="term" value="C:CatSper complex"/>
    <property type="evidence" value="ECO:0007669"/>
    <property type="project" value="InterPro"/>
</dbReference>
<dbReference type="InterPro" id="IPR028751">
    <property type="entry name" value="CATSPERD/E"/>
</dbReference>
<dbReference type="InterPro" id="IPR053816">
    <property type="entry name" value="CATSPERE_b-prop"/>
</dbReference>
<dbReference type="InterPro" id="IPR053815">
    <property type="entry name" value="CATSPERE_Ig-like"/>
</dbReference>
<dbReference type="InterPro" id="IPR053818">
    <property type="entry name" value="CATSPERE_NTD1"/>
</dbReference>
<dbReference type="InterPro" id="IPR053817">
    <property type="entry name" value="CATSPERE_NTD2"/>
</dbReference>
<dbReference type="PANTHER" id="PTHR33722:SF3">
    <property type="entry name" value="CATION CHANNEL SPERM-ASSOCIATED AUXILIARY SUBUNIT EPSILON"/>
    <property type="match status" value="1"/>
</dbReference>
<dbReference type="PANTHER" id="PTHR33722">
    <property type="entry name" value="CATION CHANNEL SPERM-ASSOCIATED PROTEIN SUBUNIT DELTA-RELATED"/>
    <property type="match status" value="1"/>
</dbReference>
<dbReference type="Pfam" id="PF22844">
    <property type="entry name" value="Beta-prop_CATSPERE"/>
    <property type="match status" value="1"/>
</dbReference>
<dbReference type="Pfam" id="PF22849">
    <property type="entry name" value="CATSPERE_Ig-like"/>
    <property type="match status" value="1"/>
</dbReference>
<dbReference type="Pfam" id="PF22841">
    <property type="entry name" value="CATSPERE_NTD1"/>
    <property type="match status" value="1"/>
</dbReference>
<dbReference type="Pfam" id="PF22843">
    <property type="entry name" value="CATSPERE_NTD2"/>
    <property type="match status" value="2"/>
</dbReference>
<sequence>MLARRVVAALLLWLSCCVSALWRYYINSQDYSIFSTRSSIKLEYEGNSFVSWKIPESCKVENNTSPKTTLHCKRAGIHTIEPIARNQEVERHLTVDNSYICYLWYFTVVDVYYNLSQIVTIWVYDPESASTEELIRTAKKPSLIVTIWVYDPESASTEELIWTAKKPSLNSLVLTKQMNTLGQRPFIFTVEKRLAYHPGPLTSEGTWVIHLPMSTDDIAKVIQGNNVDFQDCRIADLHFLLTFPMEIVLEPPGYLPLTLPPGSPLMLSWDTCISTFALLATDQETFQTNDSFQTWTRVRAPPGILSDAQRHSLRDVLVFRTGILFLVETTVYLKTDNEFIKLDKSRGISETGILGLSKRRWCQIRYLYKSAAGRTFVLAWTKSEVYGGFGKFKFMRFTTTSRLKYLLKLPPTDTLEIITVEYSWHPLEAAALLSHCSVCTTTKNIRMVIFNSAYFSWKLQDFELQVPKEAKLEYRFLYSAMPDIIVWDEHQVYYGYRNFAVFGTITTASGETNLSSLSQGSNIHQVLTDSIGNVVVKMENNVMFYIKADITEAVILHTWVNTTAKTGLFFDKSFEVCILYYNENLDEKYQLQTQPYPLILELQSINKDLGDWCPYLAFQHNIHSQFYHMDKGESLTIWSQIVYPENRGLYIVLEHYGMRILTWTQNIEYEIASGFCTKTLITRFFQTTNYELVDNYYQLQKENTGLLVFQFRPSEFSRMCPTAKPVFEIDVGCDSSKHIMVQGFNRSGCQRRDFSYVIDKELLRESLSDNLVRNL</sequence>
<name>CTSEL_MOUSE</name>
<protein>
    <recommendedName>
        <fullName evidence="2">Cation channel sperm-associated protein subunit epsilon-like protein</fullName>
        <shortName evidence="2">CatSper-epsilon-like</shortName>
        <shortName evidence="2">CatSperepsilon-like</shortName>
    </recommendedName>
</protein>
<organism>
    <name type="scientific">Mus musculus</name>
    <name type="common">Mouse</name>
    <dbReference type="NCBI Taxonomy" id="10090"/>
    <lineage>
        <taxon>Eukaryota</taxon>
        <taxon>Metazoa</taxon>
        <taxon>Chordata</taxon>
        <taxon>Craniata</taxon>
        <taxon>Vertebrata</taxon>
        <taxon>Euteleostomi</taxon>
        <taxon>Mammalia</taxon>
        <taxon>Eutheria</taxon>
        <taxon>Euarchontoglires</taxon>
        <taxon>Glires</taxon>
        <taxon>Rodentia</taxon>
        <taxon>Myomorpha</taxon>
        <taxon>Muroidea</taxon>
        <taxon>Muridae</taxon>
        <taxon>Murinae</taxon>
        <taxon>Mus</taxon>
        <taxon>Mus</taxon>
    </lineage>
</organism>
<accession>A0A0A6YXX9</accession>
<accession>B2RW93</accession>
<accession>Q3V2N6</accession>
<gene>
    <name evidence="3" type="primary">Catspere2</name>
    <name evidence="3" type="synonym">Gm16432</name>
</gene>
<reference key="1">
    <citation type="journal article" date="2005" name="Science">
        <title>The transcriptional landscape of the mammalian genome.</title>
        <authorList>
            <person name="Carninci P."/>
            <person name="Kasukawa T."/>
            <person name="Katayama S."/>
            <person name="Gough J."/>
            <person name="Frith M.C."/>
            <person name="Maeda N."/>
            <person name="Oyama R."/>
            <person name="Ravasi T."/>
            <person name="Lenhard B."/>
            <person name="Wells C."/>
            <person name="Kodzius R."/>
            <person name="Shimokawa K."/>
            <person name="Bajic V.B."/>
            <person name="Brenner S.E."/>
            <person name="Batalov S."/>
            <person name="Forrest A.R."/>
            <person name="Zavolan M."/>
            <person name="Davis M.J."/>
            <person name="Wilming L.G."/>
            <person name="Aidinis V."/>
            <person name="Allen J.E."/>
            <person name="Ambesi-Impiombato A."/>
            <person name="Apweiler R."/>
            <person name="Aturaliya R.N."/>
            <person name="Bailey T.L."/>
            <person name="Bansal M."/>
            <person name="Baxter L."/>
            <person name="Beisel K.W."/>
            <person name="Bersano T."/>
            <person name="Bono H."/>
            <person name="Chalk A.M."/>
            <person name="Chiu K.P."/>
            <person name="Choudhary V."/>
            <person name="Christoffels A."/>
            <person name="Clutterbuck D.R."/>
            <person name="Crowe M.L."/>
            <person name="Dalla E."/>
            <person name="Dalrymple B.P."/>
            <person name="de Bono B."/>
            <person name="Della Gatta G."/>
            <person name="di Bernardo D."/>
            <person name="Down T."/>
            <person name="Engstrom P."/>
            <person name="Fagiolini M."/>
            <person name="Faulkner G."/>
            <person name="Fletcher C.F."/>
            <person name="Fukushima T."/>
            <person name="Furuno M."/>
            <person name="Futaki S."/>
            <person name="Gariboldi M."/>
            <person name="Georgii-Hemming P."/>
            <person name="Gingeras T.R."/>
            <person name="Gojobori T."/>
            <person name="Green R.E."/>
            <person name="Gustincich S."/>
            <person name="Harbers M."/>
            <person name="Hayashi Y."/>
            <person name="Hensch T.K."/>
            <person name="Hirokawa N."/>
            <person name="Hill D."/>
            <person name="Huminiecki L."/>
            <person name="Iacono M."/>
            <person name="Ikeo K."/>
            <person name="Iwama A."/>
            <person name="Ishikawa T."/>
            <person name="Jakt M."/>
            <person name="Kanapin A."/>
            <person name="Katoh M."/>
            <person name="Kawasawa Y."/>
            <person name="Kelso J."/>
            <person name="Kitamura H."/>
            <person name="Kitano H."/>
            <person name="Kollias G."/>
            <person name="Krishnan S.P."/>
            <person name="Kruger A."/>
            <person name="Kummerfeld S.K."/>
            <person name="Kurochkin I.V."/>
            <person name="Lareau L.F."/>
            <person name="Lazarevic D."/>
            <person name="Lipovich L."/>
            <person name="Liu J."/>
            <person name="Liuni S."/>
            <person name="McWilliam S."/>
            <person name="Madan Babu M."/>
            <person name="Madera M."/>
            <person name="Marchionni L."/>
            <person name="Matsuda H."/>
            <person name="Matsuzawa S."/>
            <person name="Miki H."/>
            <person name="Mignone F."/>
            <person name="Miyake S."/>
            <person name="Morris K."/>
            <person name="Mottagui-Tabar S."/>
            <person name="Mulder N."/>
            <person name="Nakano N."/>
            <person name="Nakauchi H."/>
            <person name="Ng P."/>
            <person name="Nilsson R."/>
            <person name="Nishiguchi S."/>
            <person name="Nishikawa S."/>
            <person name="Nori F."/>
            <person name="Ohara O."/>
            <person name="Okazaki Y."/>
            <person name="Orlando V."/>
            <person name="Pang K.C."/>
            <person name="Pavan W.J."/>
            <person name="Pavesi G."/>
            <person name="Pesole G."/>
            <person name="Petrovsky N."/>
            <person name="Piazza S."/>
            <person name="Reed J."/>
            <person name="Reid J.F."/>
            <person name="Ring B.Z."/>
            <person name="Ringwald M."/>
            <person name="Rost B."/>
            <person name="Ruan Y."/>
            <person name="Salzberg S.L."/>
            <person name="Sandelin A."/>
            <person name="Schneider C."/>
            <person name="Schoenbach C."/>
            <person name="Sekiguchi K."/>
            <person name="Semple C.A."/>
            <person name="Seno S."/>
            <person name="Sessa L."/>
            <person name="Sheng Y."/>
            <person name="Shibata Y."/>
            <person name="Shimada H."/>
            <person name="Shimada K."/>
            <person name="Silva D."/>
            <person name="Sinclair B."/>
            <person name="Sperling S."/>
            <person name="Stupka E."/>
            <person name="Sugiura K."/>
            <person name="Sultana R."/>
            <person name="Takenaka Y."/>
            <person name="Taki K."/>
            <person name="Tammoja K."/>
            <person name="Tan S.L."/>
            <person name="Tang S."/>
            <person name="Taylor M.S."/>
            <person name="Tegner J."/>
            <person name="Teichmann S.A."/>
            <person name="Ueda H.R."/>
            <person name="van Nimwegen E."/>
            <person name="Verardo R."/>
            <person name="Wei C.L."/>
            <person name="Yagi K."/>
            <person name="Yamanishi H."/>
            <person name="Zabarovsky E."/>
            <person name="Zhu S."/>
            <person name="Zimmer A."/>
            <person name="Hide W."/>
            <person name="Bult C."/>
            <person name="Grimmond S.M."/>
            <person name="Teasdale R.D."/>
            <person name="Liu E.T."/>
            <person name="Brusic V."/>
            <person name="Quackenbush J."/>
            <person name="Wahlestedt C."/>
            <person name="Mattick J.S."/>
            <person name="Hume D.A."/>
            <person name="Kai C."/>
            <person name="Sasaki D."/>
            <person name="Tomaru Y."/>
            <person name="Fukuda S."/>
            <person name="Kanamori-Katayama M."/>
            <person name="Suzuki M."/>
            <person name="Aoki J."/>
            <person name="Arakawa T."/>
            <person name="Iida J."/>
            <person name="Imamura K."/>
            <person name="Itoh M."/>
            <person name="Kato T."/>
            <person name="Kawaji H."/>
            <person name="Kawagashira N."/>
            <person name="Kawashima T."/>
            <person name="Kojima M."/>
            <person name="Kondo S."/>
            <person name="Konno H."/>
            <person name="Nakano K."/>
            <person name="Ninomiya N."/>
            <person name="Nishio T."/>
            <person name="Okada M."/>
            <person name="Plessy C."/>
            <person name="Shibata K."/>
            <person name="Shiraki T."/>
            <person name="Suzuki S."/>
            <person name="Tagami M."/>
            <person name="Waki K."/>
            <person name="Watahiki A."/>
            <person name="Okamura-Oho Y."/>
            <person name="Suzuki H."/>
            <person name="Kawai J."/>
            <person name="Hayashizaki Y."/>
        </authorList>
    </citation>
    <scope>NUCLEOTIDE SEQUENCE [LARGE SCALE MRNA] (ISOFORM 2)</scope>
    <source>
        <strain>C57BL/6J</strain>
        <tissue>Testis</tissue>
    </source>
</reference>
<reference key="2">
    <citation type="journal article" date="2009" name="PLoS Biol.">
        <title>Lineage-specific biology revealed by a finished genome assembly of the mouse.</title>
        <authorList>
            <person name="Church D.M."/>
            <person name="Goodstadt L."/>
            <person name="Hillier L.W."/>
            <person name="Zody M.C."/>
            <person name="Goldstein S."/>
            <person name="She X."/>
            <person name="Bult C.J."/>
            <person name="Agarwala R."/>
            <person name="Cherry J.L."/>
            <person name="DiCuccio M."/>
            <person name="Hlavina W."/>
            <person name="Kapustin Y."/>
            <person name="Meric P."/>
            <person name="Maglott D."/>
            <person name="Birtle Z."/>
            <person name="Marques A.C."/>
            <person name="Graves T."/>
            <person name="Zhou S."/>
            <person name="Teague B."/>
            <person name="Potamousis K."/>
            <person name="Churas C."/>
            <person name="Place M."/>
            <person name="Herschleb J."/>
            <person name="Runnheim R."/>
            <person name="Forrest D."/>
            <person name="Amos-Landgraf J."/>
            <person name="Schwartz D.C."/>
            <person name="Cheng Z."/>
            <person name="Lindblad-Toh K."/>
            <person name="Eichler E.E."/>
            <person name="Ponting C.P."/>
        </authorList>
    </citation>
    <scope>NUCLEOTIDE SEQUENCE [LARGE SCALE GENOMIC DNA]</scope>
    <source>
        <strain>C57BL/6J</strain>
    </source>
</reference>
<reference key="3">
    <citation type="journal article" date="2004" name="Genome Res.">
        <title>The status, quality, and expansion of the NIH full-length cDNA project: the Mammalian Gene Collection (MGC).</title>
        <authorList>
            <consortium name="The MGC Project Team"/>
        </authorList>
    </citation>
    <scope>NUCLEOTIDE SEQUENCE [LARGE SCALE MRNA] (ISOFORM 2)</scope>
    <source>
        <strain>C57BL/6J</strain>
        <tissue>Brain</tissue>
    </source>
</reference>
<keyword id="KW-0025">Alternative splicing</keyword>
<keyword id="KW-0325">Glycoprotein</keyword>
<keyword id="KW-1185">Reference proteome</keyword>
<keyword id="KW-0732">Signal</keyword>
<proteinExistence type="evidence at transcript level"/>
<feature type="signal peptide" evidence="1">
    <location>
        <begin position="1"/>
        <end position="20"/>
    </location>
</feature>
<feature type="chain" id="PRO_5002024633" description="Cation channel sperm-associated protein subunit epsilon-like protein" evidence="1">
    <location>
        <begin position="21"/>
        <end position="775"/>
    </location>
</feature>
<feature type="glycosylation site" description="N-linked (GlcNAc...) asparagine" evidence="1">
    <location>
        <position position="62"/>
    </location>
</feature>
<feature type="glycosylation site" description="N-linked (GlcNAc...) asparagine" evidence="1">
    <location>
        <position position="114"/>
    </location>
</feature>
<feature type="splice variant" id="VSP_058976" description="In isoform 2.">
    <original>IV</original>
    <variation>SS</variation>
    <location>
        <begin position="144"/>
        <end position="145"/>
    </location>
</feature>
<feature type="splice variant" id="VSP_058977" description="In isoform 2.">
    <location>
        <begin position="146"/>
        <end position="775"/>
    </location>
</feature>
<feature type="sequence conflict" description="In Ref. 1; BAE20761." evidence="2" ref="1">
    <original>S</original>
    <variation>N</variation>
    <location>
        <position position="15"/>
    </location>
</feature>
<feature type="sequence conflict" description="In Ref. 1; BAE20761." evidence="2" ref="1">
    <original>E</original>
    <variation>K</variation>
    <location>
        <position position="43"/>
    </location>
</feature>